<sequence length="90" mass="10647">MARTVFCTRLQKEADGLDFQLYPGELGKRIFDNICKEAWAQWQTKQTMLINEKKLNMMDPEHRKLLEQEMVNFLFEGKEVHIEGYTPPAK</sequence>
<gene>
    <name type="ordered locus">VC0395_A0002</name>
    <name type="ordered locus">VC395_0495</name>
</gene>
<dbReference type="EMBL" id="CP000627">
    <property type="protein sequence ID" value="ABQ21277.1"/>
    <property type="molecule type" value="Genomic_DNA"/>
</dbReference>
<dbReference type="EMBL" id="CP001235">
    <property type="protein sequence ID" value="ACP08514.1"/>
    <property type="molecule type" value="Genomic_DNA"/>
</dbReference>
<dbReference type="RefSeq" id="WP_000124738.1">
    <property type="nucleotide sequence ID" value="NZ_JAACZH010000015.1"/>
</dbReference>
<dbReference type="SMR" id="A5F9I5"/>
<dbReference type="KEGG" id="vco:VC0395_A0002"/>
<dbReference type="KEGG" id="vcr:VC395_0495"/>
<dbReference type="PATRIC" id="fig|345073.21.peg.481"/>
<dbReference type="eggNOG" id="COG2924">
    <property type="taxonomic scope" value="Bacteria"/>
</dbReference>
<dbReference type="HOGENOM" id="CLU_170994_0_0_6"/>
<dbReference type="OrthoDB" id="9804318at2"/>
<dbReference type="Proteomes" id="UP000000249">
    <property type="component" value="Chromosome 2"/>
</dbReference>
<dbReference type="GO" id="GO:0005829">
    <property type="term" value="C:cytosol"/>
    <property type="evidence" value="ECO:0007669"/>
    <property type="project" value="TreeGrafter"/>
</dbReference>
<dbReference type="GO" id="GO:0005506">
    <property type="term" value="F:iron ion binding"/>
    <property type="evidence" value="ECO:0007669"/>
    <property type="project" value="UniProtKB-UniRule"/>
</dbReference>
<dbReference type="GO" id="GO:0034599">
    <property type="term" value="P:cellular response to oxidative stress"/>
    <property type="evidence" value="ECO:0007669"/>
    <property type="project" value="TreeGrafter"/>
</dbReference>
<dbReference type="FunFam" id="1.10.3880.10:FF:000001">
    <property type="entry name" value="Probable Fe(2+)-trafficking protein"/>
    <property type="match status" value="1"/>
</dbReference>
<dbReference type="Gene3D" id="1.10.3880.10">
    <property type="entry name" value="Fe(II) trafficking protein YggX"/>
    <property type="match status" value="1"/>
</dbReference>
<dbReference type="HAMAP" id="MF_00686">
    <property type="entry name" value="Fe_traffic_YggX"/>
    <property type="match status" value="1"/>
</dbReference>
<dbReference type="InterPro" id="IPR007457">
    <property type="entry name" value="Fe_traffick_prot_YggX"/>
</dbReference>
<dbReference type="InterPro" id="IPR036766">
    <property type="entry name" value="Fe_traffick_prot_YggX_sf"/>
</dbReference>
<dbReference type="NCBIfam" id="NF003817">
    <property type="entry name" value="PRK05408.1"/>
    <property type="match status" value="1"/>
</dbReference>
<dbReference type="PANTHER" id="PTHR36965">
    <property type="entry name" value="FE(2+)-TRAFFICKING PROTEIN-RELATED"/>
    <property type="match status" value="1"/>
</dbReference>
<dbReference type="PANTHER" id="PTHR36965:SF1">
    <property type="entry name" value="FE(2+)-TRAFFICKING PROTEIN-RELATED"/>
    <property type="match status" value="1"/>
</dbReference>
<dbReference type="Pfam" id="PF04362">
    <property type="entry name" value="Iron_traffic"/>
    <property type="match status" value="1"/>
</dbReference>
<dbReference type="PIRSF" id="PIRSF029827">
    <property type="entry name" value="Fe_traffic_YggX"/>
    <property type="match status" value="1"/>
</dbReference>
<dbReference type="SUPFAM" id="SSF111148">
    <property type="entry name" value="YggX-like"/>
    <property type="match status" value="1"/>
</dbReference>
<name>FETP_VIBC3</name>
<comment type="function">
    <text evidence="1">Could be a mediator in iron transactions between iron acquisition and iron-requiring processes, such as synthesis and/or repair of Fe-S clusters in biosynthetic enzymes.</text>
</comment>
<comment type="similarity">
    <text evidence="1">Belongs to the Fe(2+)-trafficking protein family.</text>
</comment>
<accession>A5F9I5</accession>
<accession>C3M4P2</accession>
<protein>
    <recommendedName>
        <fullName evidence="1">Probable Fe(2+)-trafficking protein</fullName>
    </recommendedName>
</protein>
<reference key="1">
    <citation type="submission" date="2007-03" db="EMBL/GenBank/DDBJ databases">
        <authorList>
            <person name="Heidelberg J."/>
        </authorList>
    </citation>
    <scope>NUCLEOTIDE SEQUENCE [LARGE SCALE GENOMIC DNA]</scope>
    <source>
        <strain>ATCC 39541 / Classical Ogawa 395 / O395</strain>
    </source>
</reference>
<reference key="2">
    <citation type="journal article" date="2008" name="PLoS ONE">
        <title>A recalibrated molecular clock and independent origins for the cholera pandemic clones.</title>
        <authorList>
            <person name="Feng L."/>
            <person name="Reeves P.R."/>
            <person name="Lan R."/>
            <person name="Ren Y."/>
            <person name="Gao C."/>
            <person name="Zhou Z."/>
            <person name="Ren Y."/>
            <person name="Cheng J."/>
            <person name="Wang W."/>
            <person name="Wang J."/>
            <person name="Qian W."/>
            <person name="Li D."/>
            <person name="Wang L."/>
        </authorList>
    </citation>
    <scope>NUCLEOTIDE SEQUENCE [LARGE SCALE GENOMIC DNA]</scope>
    <source>
        <strain>ATCC 39541 / Classical Ogawa 395 / O395</strain>
    </source>
</reference>
<keyword id="KW-0408">Iron</keyword>
<organism>
    <name type="scientific">Vibrio cholerae serotype O1 (strain ATCC 39541 / Classical Ogawa 395 / O395)</name>
    <dbReference type="NCBI Taxonomy" id="345073"/>
    <lineage>
        <taxon>Bacteria</taxon>
        <taxon>Pseudomonadati</taxon>
        <taxon>Pseudomonadota</taxon>
        <taxon>Gammaproteobacteria</taxon>
        <taxon>Vibrionales</taxon>
        <taxon>Vibrionaceae</taxon>
        <taxon>Vibrio</taxon>
    </lineage>
</organism>
<feature type="chain" id="PRO_1000072737" description="Probable Fe(2+)-trafficking protein">
    <location>
        <begin position="1"/>
        <end position="90"/>
    </location>
</feature>
<proteinExistence type="inferred from homology"/>
<evidence type="ECO:0000255" key="1">
    <source>
        <dbReference type="HAMAP-Rule" id="MF_00686"/>
    </source>
</evidence>